<reference key="1">
    <citation type="journal article" date="2011" name="J. Bacteriol.">
        <title>Genome of Ochrobactrum anthropi ATCC 49188 T, a versatile opportunistic pathogen and symbiont of several eukaryotic hosts.</title>
        <authorList>
            <person name="Chain P.S."/>
            <person name="Lang D.M."/>
            <person name="Comerci D.J."/>
            <person name="Malfatti S.A."/>
            <person name="Vergez L.M."/>
            <person name="Shin M."/>
            <person name="Ugalde R.A."/>
            <person name="Garcia E."/>
            <person name="Tolmasky M.E."/>
        </authorList>
    </citation>
    <scope>NUCLEOTIDE SEQUENCE [LARGE SCALE GENOMIC DNA]</scope>
    <source>
        <strain>ATCC 49188 / DSM 6882 / CCUG 24695 / JCM 21032 / LMG 3331 / NBRC 15819 / NCTC 12168 / Alc 37</strain>
    </source>
</reference>
<protein>
    <recommendedName>
        <fullName evidence="1">Phosphoenolpyruvate carboxykinase (ATP)</fullName>
        <shortName evidence="1">PCK</shortName>
        <shortName evidence="1">PEP carboxykinase</shortName>
        <shortName evidence="1">PEPCK</shortName>
        <ecNumber evidence="1">4.1.1.49</ecNumber>
    </recommendedName>
</protein>
<feature type="chain" id="PRO_1000060305" description="Phosphoenolpyruvate carboxykinase (ATP)">
    <location>
        <begin position="1"/>
        <end position="536"/>
    </location>
</feature>
<feature type="binding site" evidence="1">
    <location>
        <position position="61"/>
    </location>
    <ligand>
        <name>substrate</name>
    </ligand>
</feature>
<feature type="binding site" evidence="1">
    <location>
        <position position="195"/>
    </location>
    <ligand>
        <name>substrate</name>
    </ligand>
</feature>
<feature type="binding site" evidence="1">
    <location>
        <position position="201"/>
    </location>
    <ligand>
        <name>ATP</name>
        <dbReference type="ChEBI" id="CHEBI:30616"/>
    </ligand>
</feature>
<feature type="binding site" evidence="1">
    <location>
        <position position="201"/>
    </location>
    <ligand>
        <name>Mn(2+)</name>
        <dbReference type="ChEBI" id="CHEBI:29035"/>
    </ligand>
</feature>
<feature type="binding site" evidence="1">
    <location>
        <position position="201"/>
    </location>
    <ligand>
        <name>substrate</name>
    </ligand>
</feature>
<feature type="binding site" evidence="1">
    <location>
        <position position="220"/>
    </location>
    <ligand>
        <name>ATP</name>
        <dbReference type="ChEBI" id="CHEBI:30616"/>
    </ligand>
</feature>
<feature type="binding site" evidence="1">
    <location>
        <position position="220"/>
    </location>
    <ligand>
        <name>Mn(2+)</name>
        <dbReference type="ChEBI" id="CHEBI:29035"/>
    </ligand>
</feature>
<feature type="binding site" evidence="1">
    <location>
        <begin position="236"/>
        <end position="244"/>
    </location>
    <ligand>
        <name>ATP</name>
        <dbReference type="ChEBI" id="CHEBI:30616"/>
    </ligand>
</feature>
<feature type="binding site" evidence="1">
    <location>
        <position position="257"/>
    </location>
    <ligand>
        <name>Mn(2+)</name>
        <dbReference type="ChEBI" id="CHEBI:29035"/>
    </ligand>
</feature>
<feature type="binding site" evidence="1">
    <location>
        <position position="285"/>
    </location>
    <ligand>
        <name>ATP</name>
        <dbReference type="ChEBI" id="CHEBI:30616"/>
    </ligand>
</feature>
<feature type="binding site" evidence="1">
    <location>
        <position position="322"/>
    </location>
    <ligand>
        <name>ATP</name>
        <dbReference type="ChEBI" id="CHEBI:30616"/>
    </ligand>
</feature>
<feature type="binding site" evidence="1">
    <location>
        <position position="322"/>
    </location>
    <ligand>
        <name>substrate</name>
    </ligand>
</feature>
<feature type="binding site" evidence="1">
    <location>
        <position position="447"/>
    </location>
    <ligand>
        <name>ATP</name>
        <dbReference type="ChEBI" id="CHEBI:30616"/>
    </ligand>
</feature>
<accession>A6WX47</accession>
<sequence>MRETGIHNTAASIATSGLKEISAVFYNLGAARLYEETVRRGEAELSAQGALVARTGQHTGRSPKDKFVVRDADTEDHVWWDNNKPMSREAFELLYADFIDHAKGKELFVQDLIGGADADNKINARVITEYAWHSLFIRNLLIRPEQEALASYVPEMTIIDLPTFKADPERYGVRTETVIAVDLTRKIVLIGGTSYAGEMKKSVFTALNYILPAKGVMPMHCSANEGPNGDTAVFFGLSGTGKTTLSADPTRTLIGDDEHGWGEHGIFNFEGGCYAKTIRLSAEAEPEIYATTQRFGTVLENVVLDENRQPDFDDGSLTENTRCAYPLDFIPNASKSGKGGQPKNIIMLTADAFGVMPPIAKLTPAQAMYHFLSGYTAKVAGTEKGVTEPEATFSTCFGAPFMPRHPSEYGNLLRKLIAEHKVDCWLVNTGWTGGAYGVGKRMPIKATRALLAAALDGSLNDAEFRIDPNFGFAVPVDVPGVDTSILDPRSTWADKAAYDAQAKKLVDMFVTNFEKFESHVDHEVKDAAPAIRIAAE</sequence>
<proteinExistence type="inferred from homology"/>
<evidence type="ECO:0000255" key="1">
    <source>
        <dbReference type="HAMAP-Rule" id="MF_00453"/>
    </source>
</evidence>
<keyword id="KW-0067">ATP-binding</keyword>
<keyword id="KW-0963">Cytoplasm</keyword>
<keyword id="KW-0210">Decarboxylase</keyword>
<keyword id="KW-0312">Gluconeogenesis</keyword>
<keyword id="KW-0456">Lyase</keyword>
<keyword id="KW-0464">Manganese</keyword>
<keyword id="KW-0479">Metal-binding</keyword>
<keyword id="KW-0547">Nucleotide-binding</keyword>
<keyword id="KW-1185">Reference proteome</keyword>
<dbReference type="EC" id="4.1.1.49" evidence="1"/>
<dbReference type="EMBL" id="CP000758">
    <property type="protein sequence ID" value="ABS13551.1"/>
    <property type="molecule type" value="Genomic_DNA"/>
</dbReference>
<dbReference type="RefSeq" id="WP_012091053.1">
    <property type="nucleotide sequence ID" value="NC_009667.1"/>
</dbReference>
<dbReference type="SMR" id="A6WX47"/>
<dbReference type="STRING" id="439375.Oant_0829"/>
<dbReference type="KEGG" id="oan:Oant_0829"/>
<dbReference type="PATRIC" id="fig|439375.7.peg.874"/>
<dbReference type="eggNOG" id="COG1866">
    <property type="taxonomic scope" value="Bacteria"/>
</dbReference>
<dbReference type="HOGENOM" id="CLU_018247_0_1_5"/>
<dbReference type="PhylomeDB" id="A6WX47"/>
<dbReference type="UniPathway" id="UPA00138"/>
<dbReference type="Proteomes" id="UP000002301">
    <property type="component" value="Chromosome 1"/>
</dbReference>
<dbReference type="GO" id="GO:0005829">
    <property type="term" value="C:cytosol"/>
    <property type="evidence" value="ECO:0007669"/>
    <property type="project" value="TreeGrafter"/>
</dbReference>
<dbReference type="GO" id="GO:0005524">
    <property type="term" value="F:ATP binding"/>
    <property type="evidence" value="ECO:0007669"/>
    <property type="project" value="UniProtKB-UniRule"/>
</dbReference>
<dbReference type="GO" id="GO:0046872">
    <property type="term" value="F:metal ion binding"/>
    <property type="evidence" value="ECO:0007669"/>
    <property type="project" value="UniProtKB-KW"/>
</dbReference>
<dbReference type="GO" id="GO:0004612">
    <property type="term" value="F:phosphoenolpyruvate carboxykinase (ATP) activity"/>
    <property type="evidence" value="ECO:0007669"/>
    <property type="project" value="UniProtKB-UniRule"/>
</dbReference>
<dbReference type="GO" id="GO:0006094">
    <property type="term" value="P:gluconeogenesis"/>
    <property type="evidence" value="ECO:0007669"/>
    <property type="project" value="UniProtKB-UniRule"/>
</dbReference>
<dbReference type="CDD" id="cd00484">
    <property type="entry name" value="PEPCK_ATP"/>
    <property type="match status" value="1"/>
</dbReference>
<dbReference type="Gene3D" id="3.90.228.20">
    <property type="match status" value="1"/>
</dbReference>
<dbReference type="Gene3D" id="3.40.449.10">
    <property type="entry name" value="Phosphoenolpyruvate Carboxykinase, domain 1"/>
    <property type="match status" value="1"/>
</dbReference>
<dbReference type="Gene3D" id="2.170.8.10">
    <property type="entry name" value="Phosphoenolpyruvate Carboxykinase, domain 2"/>
    <property type="match status" value="1"/>
</dbReference>
<dbReference type="HAMAP" id="MF_00453">
    <property type="entry name" value="PEPCK_ATP"/>
    <property type="match status" value="1"/>
</dbReference>
<dbReference type="InterPro" id="IPR001272">
    <property type="entry name" value="PEP_carboxykinase_ATP"/>
</dbReference>
<dbReference type="InterPro" id="IPR013035">
    <property type="entry name" value="PEP_carboxykinase_C"/>
</dbReference>
<dbReference type="InterPro" id="IPR008210">
    <property type="entry name" value="PEP_carboxykinase_N"/>
</dbReference>
<dbReference type="InterPro" id="IPR015994">
    <property type="entry name" value="PEPCK_ATP_CS"/>
</dbReference>
<dbReference type="NCBIfam" id="TIGR00224">
    <property type="entry name" value="pckA"/>
    <property type="match status" value="1"/>
</dbReference>
<dbReference type="NCBIfam" id="NF006820">
    <property type="entry name" value="PRK09344.1-2"/>
    <property type="match status" value="1"/>
</dbReference>
<dbReference type="NCBIfam" id="NF006821">
    <property type="entry name" value="PRK09344.1-3"/>
    <property type="match status" value="1"/>
</dbReference>
<dbReference type="NCBIfam" id="NF006822">
    <property type="entry name" value="PRK09344.1-4"/>
    <property type="match status" value="1"/>
</dbReference>
<dbReference type="PANTHER" id="PTHR30031:SF0">
    <property type="entry name" value="PHOSPHOENOLPYRUVATE CARBOXYKINASE (ATP)"/>
    <property type="match status" value="1"/>
</dbReference>
<dbReference type="PANTHER" id="PTHR30031">
    <property type="entry name" value="PHOSPHOENOLPYRUVATE CARBOXYKINASE ATP"/>
    <property type="match status" value="1"/>
</dbReference>
<dbReference type="Pfam" id="PF01293">
    <property type="entry name" value="PEPCK_ATP"/>
    <property type="match status" value="1"/>
</dbReference>
<dbReference type="PIRSF" id="PIRSF006294">
    <property type="entry name" value="PEP_crbxkin"/>
    <property type="match status" value="1"/>
</dbReference>
<dbReference type="SUPFAM" id="SSF68923">
    <property type="entry name" value="PEP carboxykinase N-terminal domain"/>
    <property type="match status" value="1"/>
</dbReference>
<dbReference type="SUPFAM" id="SSF53795">
    <property type="entry name" value="PEP carboxykinase-like"/>
    <property type="match status" value="1"/>
</dbReference>
<dbReference type="PROSITE" id="PS00532">
    <property type="entry name" value="PEPCK_ATP"/>
    <property type="match status" value="1"/>
</dbReference>
<name>PCKA_BRUA4</name>
<gene>
    <name evidence="1" type="primary">pckA</name>
    <name type="ordered locus">Oant_0829</name>
</gene>
<organism>
    <name type="scientific">Brucella anthropi (strain ATCC 49188 / DSM 6882 / CCUG 24695 / JCM 21032 / LMG 3331 / NBRC 15819 / NCTC 12168 / Alc 37)</name>
    <name type="common">Ochrobactrum anthropi</name>
    <dbReference type="NCBI Taxonomy" id="439375"/>
    <lineage>
        <taxon>Bacteria</taxon>
        <taxon>Pseudomonadati</taxon>
        <taxon>Pseudomonadota</taxon>
        <taxon>Alphaproteobacteria</taxon>
        <taxon>Hyphomicrobiales</taxon>
        <taxon>Brucellaceae</taxon>
        <taxon>Brucella/Ochrobactrum group</taxon>
        <taxon>Brucella</taxon>
    </lineage>
</organism>
<comment type="function">
    <text evidence="1">Involved in the gluconeogenesis. Catalyzes the conversion of oxaloacetate (OAA) to phosphoenolpyruvate (PEP) through direct phosphoryl transfer between the nucleoside triphosphate and OAA.</text>
</comment>
<comment type="catalytic activity">
    <reaction evidence="1">
        <text>oxaloacetate + ATP = phosphoenolpyruvate + ADP + CO2</text>
        <dbReference type="Rhea" id="RHEA:18617"/>
        <dbReference type="ChEBI" id="CHEBI:16452"/>
        <dbReference type="ChEBI" id="CHEBI:16526"/>
        <dbReference type="ChEBI" id="CHEBI:30616"/>
        <dbReference type="ChEBI" id="CHEBI:58702"/>
        <dbReference type="ChEBI" id="CHEBI:456216"/>
        <dbReference type="EC" id="4.1.1.49"/>
    </reaction>
</comment>
<comment type="cofactor">
    <cofactor evidence="1">
        <name>Mn(2+)</name>
        <dbReference type="ChEBI" id="CHEBI:29035"/>
    </cofactor>
    <text evidence="1">Binds 1 Mn(2+) ion per subunit.</text>
</comment>
<comment type="pathway">
    <text evidence="1">Carbohydrate biosynthesis; gluconeogenesis.</text>
</comment>
<comment type="subcellular location">
    <subcellularLocation>
        <location evidence="1">Cytoplasm</location>
    </subcellularLocation>
</comment>
<comment type="similarity">
    <text evidence="1">Belongs to the phosphoenolpyruvate carboxykinase (ATP) family.</text>
</comment>